<sequence>MSTKLQDHFDKITKILSGFGVEGCISYGEITFSIRDQRDIHLILKKLKKEYLFEQLTDVTAVDYLTYGQSDWQVGKVVSQTGFSRGRQQDFKTAAVDNRFEIIYQLLSMANNVRIRVKCKLKDAQIILVDSVSDLWSSANWAEREVYDMFGIYFNNHPDLRRVLTDYGFVGHPLRKDFPQTGYVEMRYDENLGRVVYEPVEIDDRVNTPRVIRN</sequence>
<name>NUOC_FRATN</name>
<dbReference type="EC" id="7.1.1.-" evidence="1"/>
<dbReference type="EMBL" id="CP000439">
    <property type="protein sequence ID" value="ABK90535.1"/>
    <property type="molecule type" value="Genomic_DNA"/>
</dbReference>
<dbReference type="RefSeq" id="WP_003041313.1">
    <property type="nucleotide sequence ID" value="NZ_CP009633.1"/>
</dbReference>
<dbReference type="SMR" id="A0Q8H0"/>
<dbReference type="KEGG" id="ftn:FTN_1678"/>
<dbReference type="KEGG" id="ftx:AW25_310"/>
<dbReference type="Proteomes" id="UP000000762">
    <property type="component" value="Chromosome"/>
</dbReference>
<dbReference type="GO" id="GO:0005886">
    <property type="term" value="C:plasma membrane"/>
    <property type="evidence" value="ECO:0007669"/>
    <property type="project" value="UniProtKB-SubCell"/>
</dbReference>
<dbReference type="GO" id="GO:0008137">
    <property type="term" value="F:NADH dehydrogenase (ubiquinone) activity"/>
    <property type="evidence" value="ECO:0007669"/>
    <property type="project" value="InterPro"/>
</dbReference>
<dbReference type="GO" id="GO:0050136">
    <property type="term" value="F:NADH:ubiquinone reductase (non-electrogenic) activity"/>
    <property type="evidence" value="ECO:0007669"/>
    <property type="project" value="UniProtKB-UniRule"/>
</dbReference>
<dbReference type="GO" id="GO:0048038">
    <property type="term" value="F:quinone binding"/>
    <property type="evidence" value="ECO:0007669"/>
    <property type="project" value="UniProtKB-KW"/>
</dbReference>
<dbReference type="Gene3D" id="3.30.460.80">
    <property type="entry name" value="NADH:ubiquinone oxidoreductase, 30kDa subunit"/>
    <property type="match status" value="1"/>
</dbReference>
<dbReference type="HAMAP" id="MF_01357">
    <property type="entry name" value="NDH1_NuoC"/>
    <property type="match status" value="1"/>
</dbReference>
<dbReference type="InterPro" id="IPR010218">
    <property type="entry name" value="NADH_DH_suC"/>
</dbReference>
<dbReference type="InterPro" id="IPR037232">
    <property type="entry name" value="NADH_quin_OxRdtase_su_C/D-like"/>
</dbReference>
<dbReference type="InterPro" id="IPR001268">
    <property type="entry name" value="NADH_UbQ_OxRdtase_30kDa_su"/>
</dbReference>
<dbReference type="InterPro" id="IPR020396">
    <property type="entry name" value="NADH_UbQ_OxRdtase_CS"/>
</dbReference>
<dbReference type="NCBIfam" id="TIGR01961">
    <property type="entry name" value="NuoC_fam"/>
    <property type="match status" value="1"/>
</dbReference>
<dbReference type="NCBIfam" id="NF004730">
    <property type="entry name" value="PRK06074.1-1"/>
    <property type="match status" value="1"/>
</dbReference>
<dbReference type="PANTHER" id="PTHR10884:SF14">
    <property type="entry name" value="NADH DEHYDROGENASE [UBIQUINONE] IRON-SULFUR PROTEIN 3, MITOCHONDRIAL"/>
    <property type="match status" value="1"/>
</dbReference>
<dbReference type="PANTHER" id="PTHR10884">
    <property type="entry name" value="NADH DEHYDROGENASE UBIQUINONE IRON-SULFUR PROTEIN 3"/>
    <property type="match status" value="1"/>
</dbReference>
<dbReference type="Pfam" id="PF00329">
    <property type="entry name" value="Complex1_30kDa"/>
    <property type="match status" value="1"/>
</dbReference>
<dbReference type="SUPFAM" id="SSF143243">
    <property type="entry name" value="Nqo5-like"/>
    <property type="match status" value="1"/>
</dbReference>
<dbReference type="PROSITE" id="PS00542">
    <property type="entry name" value="COMPLEX1_30K"/>
    <property type="match status" value="1"/>
</dbReference>
<evidence type="ECO:0000255" key="1">
    <source>
        <dbReference type="HAMAP-Rule" id="MF_01357"/>
    </source>
</evidence>
<comment type="function">
    <text evidence="1">NDH-1 shuttles electrons from NADH, via FMN and iron-sulfur (Fe-S) centers, to quinones in the respiratory chain. The immediate electron acceptor for the enzyme in this species is believed to be ubiquinone. Couples the redox reaction to proton translocation (for every two electrons transferred, four hydrogen ions are translocated across the cytoplasmic membrane), and thus conserves the redox energy in a proton gradient.</text>
</comment>
<comment type="catalytic activity">
    <reaction evidence="1">
        <text>a quinone + NADH + 5 H(+)(in) = a quinol + NAD(+) + 4 H(+)(out)</text>
        <dbReference type="Rhea" id="RHEA:57888"/>
        <dbReference type="ChEBI" id="CHEBI:15378"/>
        <dbReference type="ChEBI" id="CHEBI:24646"/>
        <dbReference type="ChEBI" id="CHEBI:57540"/>
        <dbReference type="ChEBI" id="CHEBI:57945"/>
        <dbReference type="ChEBI" id="CHEBI:132124"/>
    </reaction>
</comment>
<comment type="subunit">
    <text evidence="1">NDH-1 is composed of 14 different subunits. Subunits NuoB, C, D, E, F, and G constitute the peripheral sector of the complex.</text>
</comment>
<comment type="subcellular location">
    <subcellularLocation>
        <location evidence="1">Cell inner membrane</location>
        <topology evidence="1">Peripheral membrane protein</topology>
        <orientation evidence="1">Cytoplasmic side</orientation>
    </subcellularLocation>
</comment>
<comment type="similarity">
    <text evidence="1">Belongs to the complex I 30 kDa subunit family.</text>
</comment>
<keyword id="KW-0997">Cell inner membrane</keyword>
<keyword id="KW-1003">Cell membrane</keyword>
<keyword id="KW-0472">Membrane</keyword>
<keyword id="KW-0520">NAD</keyword>
<keyword id="KW-0874">Quinone</keyword>
<keyword id="KW-1278">Translocase</keyword>
<keyword id="KW-0813">Transport</keyword>
<keyword id="KW-0830">Ubiquinone</keyword>
<accession>A0Q8H0</accession>
<reference key="1">
    <citation type="journal article" date="2007" name="Genome Biol.">
        <title>Comparison of Francisella tularensis genomes reveals evolutionary events associated with the emergence of human pathogenic strains.</title>
        <authorList>
            <person name="Rohmer L."/>
            <person name="Fong C."/>
            <person name="Abmayr S."/>
            <person name="Wasnick M."/>
            <person name="Larson Freeman T.J."/>
            <person name="Radey M."/>
            <person name="Guina T."/>
            <person name="Svensson K."/>
            <person name="Hayden H.S."/>
            <person name="Jacobs M."/>
            <person name="Gallagher L.A."/>
            <person name="Manoil C."/>
            <person name="Ernst R.K."/>
            <person name="Drees B."/>
            <person name="Buckley D."/>
            <person name="Haugen E."/>
            <person name="Bovee D."/>
            <person name="Zhou Y."/>
            <person name="Chang J."/>
            <person name="Levy R."/>
            <person name="Lim R."/>
            <person name="Gillett W."/>
            <person name="Guenthener D."/>
            <person name="Kang A."/>
            <person name="Shaffer S.A."/>
            <person name="Taylor G."/>
            <person name="Chen J."/>
            <person name="Gallis B."/>
            <person name="D'Argenio D.A."/>
            <person name="Forsman M."/>
            <person name="Olson M.V."/>
            <person name="Goodlett D.R."/>
            <person name="Kaul R."/>
            <person name="Miller S.I."/>
            <person name="Brittnacher M.J."/>
        </authorList>
    </citation>
    <scope>NUCLEOTIDE SEQUENCE [LARGE SCALE GENOMIC DNA]</scope>
    <source>
        <strain>U112</strain>
    </source>
</reference>
<proteinExistence type="inferred from homology"/>
<feature type="chain" id="PRO_0000358100" description="NADH-quinone oxidoreductase subunit C">
    <location>
        <begin position="1"/>
        <end position="214"/>
    </location>
</feature>
<organism>
    <name type="scientific">Francisella tularensis subsp. novicida (strain U112)</name>
    <dbReference type="NCBI Taxonomy" id="401614"/>
    <lineage>
        <taxon>Bacteria</taxon>
        <taxon>Pseudomonadati</taxon>
        <taxon>Pseudomonadota</taxon>
        <taxon>Gammaproteobacteria</taxon>
        <taxon>Thiotrichales</taxon>
        <taxon>Francisellaceae</taxon>
        <taxon>Francisella</taxon>
    </lineage>
</organism>
<gene>
    <name evidence="1" type="primary">nuoC</name>
    <name type="ordered locus">FTN_1678</name>
</gene>
<protein>
    <recommendedName>
        <fullName evidence="1">NADH-quinone oxidoreductase subunit C</fullName>
        <ecNumber evidence="1">7.1.1.-</ecNumber>
    </recommendedName>
    <alternativeName>
        <fullName evidence="1">NADH dehydrogenase I subunit C</fullName>
    </alternativeName>
    <alternativeName>
        <fullName evidence="1">NDH-1 subunit C</fullName>
    </alternativeName>
</protein>